<feature type="initiator methionine" description="Removed" evidence="3 4">
    <location>
        <position position="1"/>
    </location>
</feature>
<feature type="chain" id="PRO_0000142895" description="Brain acid soluble protein 1">
    <location>
        <begin position="2"/>
        <end position="227"/>
    </location>
</feature>
<feature type="region of interest" description="Disordered" evidence="2">
    <location>
        <begin position="1"/>
        <end position="227"/>
    </location>
</feature>
<feature type="compositionally biased region" description="Basic residues" evidence="2">
    <location>
        <begin position="1"/>
        <end position="11"/>
    </location>
</feature>
<feature type="compositionally biased region" description="Basic and acidic residues" evidence="2">
    <location>
        <begin position="15"/>
        <end position="27"/>
    </location>
</feature>
<feature type="compositionally biased region" description="Basic and acidic residues" evidence="2">
    <location>
        <begin position="49"/>
        <end position="105"/>
    </location>
</feature>
<feature type="compositionally biased region" description="Low complexity" evidence="2">
    <location>
        <begin position="106"/>
        <end position="139"/>
    </location>
</feature>
<feature type="compositionally biased region" description="Basic and acidic residues" evidence="2">
    <location>
        <begin position="140"/>
        <end position="152"/>
    </location>
</feature>
<feature type="compositionally biased region" description="Polar residues" evidence="2">
    <location>
        <begin position="173"/>
        <end position="185"/>
    </location>
</feature>
<feature type="compositionally biased region" description="Polar residues" evidence="2">
    <location>
        <begin position="218"/>
        <end position="227"/>
    </location>
</feature>
<feature type="modified residue" description="Phosphothreonine" evidence="8">
    <location>
        <position position="31"/>
    </location>
</feature>
<feature type="modified residue" description="Phosphothreonine" evidence="7 8 9 10 11">
    <location>
        <position position="36"/>
    </location>
</feature>
<feature type="modified residue" description="Phosphoserine" evidence="1">
    <location>
        <position position="40"/>
    </location>
</feature>
<feature type="modified residue" description="Phosphoserine" evidence="8 10">
    <location>
        <position position="164"/>
    </location>
</feature>
<feature type="modified residue" description="Phosphoserine" evidence="8">
    <location>
        <position position="170"/>
    </location>
</feature>
<feature type="modified residue" description="Phosphoserine" evidence="8">
    <location>
        <position position="172"/>
    </location>
</feature>
<feature type="modified residue" description="Phosphoserine" evidence="8">
    <location>
        <position position="176"/>
    </location>
</feature>
<feature type="modified residue" description="Phosphoserine" evidence="1">
    <location>
        <position position="195"/>
    </location>
</feature>
<feature type="modified residue" description="Phosphothreonine" evidence="8 9">
    <location>
        <position position="196"/>
    </location>
</feature>
<feature type="modified residue" description="Phosphoserine" evidence="8 10">
    <location>
        <position position="205"/>
    </location>
</feature>
<feature type="modified residue" description="Phosphoserine" evidence="10">
    <location>
        <position position="219"/>
    </location>
</feature>
<feature type="lipid moiety-binding region" description="N-myristoyl glycine" evidence="3 4">
    <location>
        <position position="2"/>
    </location>
</feature>
<feature type="cross-link" description="Glycyl lysine isopeptide (Lys-Gly) (interchain with G-Cter in SUMO2)" evidence="13">
    <location>
        <position position="25"/>
    </location>
</feature>
<feature type="cross-link" description="Glycyl lysine isopeptide (Lys-Gly) (interchain with G-Cter in SUMO2)" evidence="13">
    <location>
        <position position="84"/>
    </location>
</feature>
<feature type="cross-link" description="Glycyl lysine isopeptide (Lys-Gly) (interchain with G-Cter in SUMO2)" evidence="13">
    <location>
        <position position="97"/>
    </location>
</feature>
<feature type="cross-link" description="Glycyl lysine isopeptide (Lys-Gly) (interchain with G-Cter in SUMO2)" evidence="12">
    <location>
        <position position="163"/>
    </location>
</feature>
<feature type="splice variant" id="VSP_037994" description="In isoform 2." evidence="5">
    <location>
        <begin position="88"/>
        <end position="141"/>
    </location>
</feature>
<feature type="sequence variant" id="VAR_048396" description="In dbSNP:rs3733748.">
    <original>A</original>
    <variation>V</variation>
    <location>
        <position position="76"/>
    </location>
</feature>
<feature type="sequence conflict" description="In Ref. 1; AAC67374." evidence="6" ref="1">
    <original>A</original>
    <variation>P</variation>
    <location>
        <position position="45"/>
    </location>
</feature>
<feature type="sequence conflict" description="In Ref. 1; AAC67374." evidence="6" ref="1">
    <original>AA</original>
    <variation>LR</variation>
    <location>
        <begin position="114"/>
        <end position="115"/>
    </location>
</feature>
<feature type="sequence conflict" description="In Ref. 1; AAC67374." evidence="6" ref="1">
    <original>APAES</original>
    <variation>GPRPR</variation>
    <location>
        <begin position="128"/>
        <end position="132"/>
    </location>
</feature>
<feature type="sequence conflict" description="In Ref. 5; AAH00518." evidence="6" ref="5">
    <original>E</original>
    <variation>G</variation>
    <location>
        <position position="152"/>
    </location>
</feature>
<organism>
    <name type="scientific">Homo sapiens</name>
    <name type="common">Human</name>
    <dbReference type="NCBI Taxonomy" id="9606"/>
    <lineage>
        <taxon>Eukaryota</taxon>
        <taxon>Metazoa</taxon>
        <taxon>Chordata</taxon>
        <taxon>Craniata</taxon>
        <taxon>Vertebrata</taxon>
        <taxon>Euteleostomi</taxon>
        <taxon>Mammalia</taxon>
        <taxon>Eutheria</taxon>
        <taxon>Euarchontoglires</taxon>
        <taxon>Primates</taxon>
        <taxon>Haplorrhini</taxon>
        <taxon>Catarrhini</taxon>
        <taxon>Hominidae</taxon>
        <taxon>Homo</taxon>
    </lineage>
</organism>
<sequence>MGGKLSKKKKGYNVNDEKAKEKDKKAEGAATEEEGTPKESEPQAAAEPAEAKEGKEKPDQDAEGKAEEKEGEKDAAAAKEEAPKAEPEKTEGAAEAKAEPPKAPEQEQAAPGPAAGGEAPKAAEAAAAPAESAAPAAGEEPSKEEGEPKKTEAPAAPAAQETKSDGAPASDSKPGSSEAAPSSKETPAATEAPSSTPKAQGPAASAEEPKPVEAPAANSDQTVTVKE</sequence>
<reference key="1">
    <citation type="journal article" date="1998" name="Mol. Cells">
        <title>Characterization of bovine and human cDNAs encoding NAP-22 (22 kDa neuronal tissue-enriched acidic protein) homologs.</title>
        <authorList>
            <person name="Park S."/>
            <person name="Kim Y.-I."/>
            <person name="Kim B."/>
            <person name="Seong C."/>
            <person name="Oh Y."/>
            <person name="Baek K."/>
            <person name="Yoon J."/>
        </authorList>
    </citation>
    <scope>NUCLEOTIDE SEQUENCE [MRNA] (ISOFORM 1)</scope>
</reference>
<reference key="2">
    <citation type="submission" date="2003-05" db="EMBL/GenBank/DDBJ databases">
        <title>Cloning of human full-length CDSs in BD Creator(TM) system donor vector.</title>
        <authorList>
            <person name="Kalnine N."/>
            <person name="Chen X."/>
            <person name="Rolfs A."/>
            <person name="Halleck A."/>
            <person name="Hines L."/>
            <person name="Eisenstein S."/>
            <person name="Koundinya M."/>
            <person name="Raphael J."/>
            <person name="Moreira D."/>
            <person name="Kelley T."/>
            <person name="LaBaer J."/>
            <person name="Lin Y."/>
            <person name="Phelan M."/>
            <person name="Farmer A."/>
        </authorList>
    </citation>
    <scope>NUCLEOTIDE SEQUENCE [LARGE SCALE MRNA] (ISOFORM 1)</scope>
</reference>
<reference key="3">
    <citation type="journal article" date="2004" name="Nat. Genet.">
        <title>Complete sequencing and characterization of 21,243 full-length human cDNAs.</title>
        <authorList>
            <person name="Ota T."/>
            <person name="Suzuki Y."/>
            <person name="Nishikawa T."/>
            <person name="Otsuki T."/>
            <person name="Sugiyama T."/>
            <person name="Irie R."/>
            <person name="Wakamatsu A."/>
            <person name="Hayashi K."/>
            <person name="Sato H."/>
            <person name="Nagai K."/>
            <person name="Kimura K."/>
            <person name="Makita H."/>
            <person name="Sekine M."/>
            <person name="Obayashi M."/>
            <person name="Nishi T."/>
            <person name="Shibahara T."/>
            <person name="Tanaka T."/>
            <person name="Ishii S."/>
            <person name="Yamamoto J."/>
            <person name="Saito K."/>
            <person name="Kawai Y."/>
            <person name="Isono Y."/>
            <person name="Nakamura Y."/>
            <person name="Nagahari K."/>
            <person name="Murakami K."/>
            <person name="Yasuda T."/>
            <person name="Iwayanagi T."/>
            <person name="Wagatsuma M."/>
            <person name="Shiratori A."/>
            <person name="Sudo H."/>
            <person name="Hosoiri T."/>
            <person name="Kaku Y."/>
            <person name="Kodaira H."/>
            <person name="Kondo H."/>
            <person name="Sugawara M."/>
            <person name="Takahashi M."/>
            <person name="Kanda K."/>
            <person name="Yokoi T."/>
            <person name="Furuya T."/>
            <person name="Kikkawa E."/>
            <person name="Omura Y."/>
            <person name="Abe K."/>
            <person name="Kamihara K."/>
            <person name="Katsuta N."/>
            <person name="Sato K."/>
            <person name="Tanikawa M."/>
            <person name="Yamazaki M."/>
            <person name="Ninomiya K."/>
            <person name="Ishibashi T."/>
            <person name="Yamashita H."/>
            <person name="Murakawa K."/>
            <person name="Fujimori K."/>
            <person name="Tanai H."/>
            <person name="Kimata M."/>
            <person name="Watanabe M."/>
            <person name="Hiraoka S."/>
            <person name="Chiba Y."/>
            <person name="Ishida S."/>
            <person name="Ono Y."/>
            <person name="Takiguchi S."/>
            <person name="Watanabe S."/>
            <person name="Yosida M."/>
            <person name="Hotuta T."/>
            <person name="Kusano J."/>
            <person name="Kanehori K."/>
            <person name="Takahashi-Fujii A."/>
            <person name="Hara H."/>
            <person name="Tanase T.-O."/>
            <person name="Nomura Y."/>
            <person name="Togiya S."/>
            <person name="Komai F."/>
            <person name="Hara R."/>
            <person name="Takeuchi K."/>
            <person name="Arita M."/>
            <person name="Imose N."/>
            <person name="Musashino K."/>
            <person name="Yuuki H."/>
            <person name="Oshima A."/>
            <person name="Sasaki N."/>
            <person name="Aotsuka S."/>
            <person name="Yoshikawa Y."/>
            <person name="Matsunawa H."/>
            <person name="Ichihara T."/>
            <person name="Shiohata N."/>
            <person name="Sano S."/>
            <person name="Moriya S."/>
            <person name="Momiyama H."/>
            <person name="Satoh N."/>
            <person name="Takami S."/>
            <person name="Terashima Y."/>
            <person name="Suzuki O."/>
            <person name="Nakagawa S."/>
            <person name="Senoh A."/>
            <person name="Mizoguchi H."/>
            <person name="Goto Y."/>
            <person name="Shimizu F."/>
            <person name="Wakebe H."/>
            <person name="Hishigaki H."/>
            <person name="Watanabe T."/>
            <person name="Sugiyama A."/>
            <person name="Takemoto M."/>
            <person name="Kawakami B."/>
            <person name="Yamazaki M."/>
            <person name="Watanabe K."/>
            <person name="Kumagai A."/>
            <person name="Itakura S."/>
            <person name="Fukuzumi Y."/>
            <person name="Fujimori Y."/>
            <person name="Komiyama M."/>
            <person name="Tashiro H."/>
            <person name="Tanigami A."/>
            <person name="Fujiwara T."/>
            <person name="Ono T."/>
            <person name="Yamada K."/>
            <person name="Fujii Y."/>
            <person name="Ozaki K."/>
            <person name="Hirao M."/>
            <person name="Ohmori Y."/>
            <person name="Kawabata A."/>
            <person name="Hikiji T."/>
            <person name="Kobatake N."/>
            <person name="Inagaki H."/>
            <person name="Ikema Y."/>
            <person name="Okamoto S."/>
            <person name="Okitani R."/>
            <person name="Kawakami T."/>
            <person name="Noguchi S."/>
            <person name="Itoh T."/>
            <person name="Shigeta K."/>
            <person name="Senba T."/>
            <person name="Matsumura K."/>
            <person name="Nakajima Y."/>
            <person name="Mizuno T."/>
            <person name="Morinaga M."/>
            <person name="Sasaki M."/>
            <person name="Togashi T."/>
            <person name="Oyama M."/>
            <person name="Hata H."/>
            <person name="Watanabe M."/>
            <person name="Komatsu T."/>
            <person name="Mizushima-Sugano J."/>
            <person name="Satoh T."/>
            <person name="Shirai Y."/>
            <person name="Takahashi Y."/>
            <person name="Nakagawa K."/>
            <person name="Okumura K."/>
            <person name="Nagase T."/>
            <person name="Nomura N."/>
            <person name="Kikuchi H."/>
            <person name="Masuho Y."/>
            <person name="Yamashita R."/>
            <person name="Nakai K."/>
            <person name="Yada T."/>
            <person name="Nakamura Y."/>
            <person name="Ohara O."/>
            <person name="Isogai T."/>
            <person name="Sugano S."/>
        </authorList>
    </citation>
    <scope>NUCLEOTIDE SEQUENCE [LARGE SCALE MRNA] (ISOFORM 2)</scope>
    <source>
        <tissue>Subthalamic nucleus</tissue>
    </source>
</reference>
<reference key="4">
    <citation type="submission" date="2005-09" db="EMBL/GenBank/DDBJ databases">
        <authorList>
            <person name="Mural R.J."/>
            <person name="Istrail S."/>
            <person name="Sutton G.G."/>
            <person name="Florea L."/>
            <person name="Halpern A.L."/>
            <person name="Mobarry C.M."/>
            <person name="Lippert R."/>
            <person name="Walenz B."/>
            <person name="Shatkay H."/>
            <person name="Dew I."/>
            <person name="Miller J.R."/>
            <person name="Flanigan M.J."/>
            <person name="Edwards N.J."/>
            <person name="Bolanos R."/>
            <person name="Fasulo D."/>
            <person name="Halldorsson B.V."/>
            <person name="Hannenhalli S."/>
            <person name="Turner R."/>
            <person name="Yooseph S."/>
            <person name="Lu F."/>
            <person name="Nusskern D.R."/>
            <person name="Shue B.C."/>
            <person name="Zheng X.H."/>
            <person name="Zhong F."/>
            <person name="Delcher A.L."/>
            <person name="Huson D.H."/>
            <person name="Kravitz S.A."/>
            <person name="Mouchard L."/>
            <person name="Reinert K."/>
            <person name="Remington K.A."/>
            <person name="Clark A.G."/>
            <person name="Waterman M.S."/>
            <person name="Eichler E.E."/>
            <person name="Adams M.D."/>
            <person name="Hunkapiller M.W."/>
            <person name="Myers E.W."/>
            <person name="Venter J.C."/>
        </authorList>
    </citation>
    <scope>NUCLEOTIDE SEQUENCE [LARGE SCALE GENOMIC DNA]</scope>
</reference>
<reference key="5">
    <citation type="journal article" date="2004" name="Genome Res.">
        <title>The status, quality, and expansion of the NIH full-length cDNA project: the Mammalian Gene Collection (MGC).</title>
        <authorList>
            <consortium name="The MGC Project Team"/>
        </authorList>
    </citation>
    <scope>NUCLEOTIDE SEQUENCE [LARGE SCALE MRNA] (ISOFORM 1)</scope>
    <source>
        <tissue>Lung</tissue>
    </source>
</reference>
<reference key="6">
    <citation type="journal article" date="1997" name="Biochimie">
        <title>The BASP1 family of myristoylated proteins abundant in axonal termini. Primary structure analysis and physico-chemical properties.</title>
        <authorList>
            <person name="Mosevitsky M.I."/>
            <person name="Capony J.-P."/>
            <person name="Skladchikova G.Y.U."/>
            <person name="Novitskaya V.A."/>
            <person name="Plekhanov A.Y.U."/>
            <person name="Zakharov V.V."/>
        </authorList>
    </citation>
    <scope>PROTEIN SEQUENCE OF 2-227</scope>
    <scope>MYRISTOYLATION AT GLY-2</scope>
    <scope>MASS SPECTROMETRY</scope>
    <source>
        <tissue>Brain</tissue>
    </source>
</reference>
<reference key="7">
    <citation type="journal article" date="2006" name="Cell">
        <title>Global, in vivo, and site-specific phosphorylation dynamics in signaling networks.</title>
        <authorList>
            <person name="Olsen J.V."/>
            <person name="Blagoev B."/>
            <person name="Gnad F."/>
            <person name="Macek B."/>
            <person name="Kumar C."/>
            <person name="Mortensen P."/>
            <person name="Mann M."/>
        </authorList>
    </citation>
    <scope>PHOSPHORYLATION [LARGE SCALE ANALYSIS] AT THR-36</scope>
    <scope>IDENTIFICATION BY MASS SPECTROMETRY [LARGE SCALE ANALYSIS]</scope>
    <source>
        <tissue>Cervix carcinoma</tissue>
    </source>
</reference>
<reference key="8">
    <citation type="journal article" date="2008" name="Proc. Natl. Acad. Sci. U.S.A.">
        <title>A quantitative atlas of mitotic phosphorylation.</title>
        <authorList>
            <person name="Dephoure N."/>
            <person name="Zhou C."/>
            <person name="Villen J."/>
            <person name="Beausoleil S.A."/>
            <person name="Bakalarski C.E."/>
            <person name="Elledge S.J."/>
            <person name="Gygi S.P."/>
        </authorList>
    </citation>
    <scope>PHOSPHORYLATION [LARGE SCALE ANALYSIS] AT THR-31; THR-36; SER-164; SER-170; SER-172; SER-176; THR-196 AND SER-205</scope>
    <scope>IDENTIFICATION BY MASS SPECTROMETRY [LARGE SCALE ANALYSIS]</scope>
    <source>
        <tissue>Cervix carcinoma</tissue>
    </source>
</reference>
<reference key="9">
    <citation type="journal article" date="2009" name="Anal. Chem.">
        <title>Lys-N and trypsin cover complementary parts of the phosphoproteome in a refined SCX-based approach.</title>
        <authorList>
            <person name="Gauci S."/>
            <person name="Helbig A.O."/>
            <person name="Slijper M."/>
            <person name="Krijgsveld J."/>
            <person name="Heck A.J."/>
            <person name="Mohammed S."/>
        </authorList>
    </citation>
    <scope>IDENTIFICATION BY MASS SPECTROMETRY [LARGE SCALE ANALYSIS]</scope>
</reference>
<reference key="10">
    <citation type="journal article" date="2010" name="Sci. Signal.">
        <title>Quantitative phosphoproteomics reveals widespread full phosphorylation site occupancy during mitosis.</title>
        <authorList>
            <person name="Olsen J.V."/>
            <person name="Vermeulen M."/>
            <person name="Santamaria A."/>
            <person name="Kumar C."/>
            <person name="Miller M.L."/>
            <person name="Jensen L.J."/>
            <person name="Gnad F."/>
            <person name="Cox J."/>
            <person name="Jensen T.S."/>
            <person name="Nigg E.A."/>
            <person name="Brunak S."/>
            <person name="Mann M."/>
        </authorList>
    </citation>
    <scope>PHOSPHORYLATION [LARGE SCALE ANALYSIS] AT THR-36 AND THR-196</scope>
    <scope>IDENTIFICATION BY MASS SPECTROMETRY [LARGE SCALE ANALYSIS]</scope>
    <source>
        <tissue>Cervix carcinoma</tissue>
    </source>
</reference>
<reference key="11">
    <citation type="journal article" date="2011" name="BMC Syst. Biol.">
        <title>Initial characterization of the human central proteome.</title>
        <authorList>
            <person name="Burkard T.R."/>
            <person name="Planyavsky M."/>
            <person name="Kaupe I."/>
            <person name="Breitwieser F.P."/>
            <person name="Buerckstuemmer T."/>
            <person name="Bennett K.L."/>
            <person name="Superti-Furga G."/>
            <person name="Colinge J."/>
        </authorList>
    </citation>
    <scope>IDENTIFICATION BY MASS SPECTROMETRY [LARGE SCALE ANALYSIS]</scope>
</reference>
<reference key="12">
    <citation type="journal article" date="2011" name="Sci. Signal.">
        <title>System-wide temporal characterization of the proteome and phosphoproteome of human embryonic stem cell differentiation.</title>
        <authorList>
            <person name="Rigbolt K.T."/>
            <person name="Prokhorova T.A."/>
            <person name="Akimov V."/>
            <person name="Henningsen J."/>
            <person name="Johansen P.T."/>
            <person name="Kratchmarova I."/>
            <person name="Kassem M."/>
            <person name="Mann M."/>
            <person name="Olsen J.V."/>
            <person name="Blagoev B."/>
        </authorList>
    </citation>
    <scope>IDENTIFICATION BY MASS SPECTROMETRY [LARGE SCALE ANALYSIS]</scope>
</reference>
<reference key="13">
    <citation type="journal article" date="2013" name="J. Proteome Res.">
        <title>Toward a comprehensive characterization of a human cancer cell phosphoproteome.</title>
        <authorList>
            <person name="Zhou H."/>
            <person name="Di Palma S."/>
            <person name="Preisinger C."/>
            <person name="Peng M."/>
            <person name="Polat A.N."/>
            <person name="Heck A.J."/>
            <person name="Mohammed S."/>
        </authorList>
    </citation>
    <scope>PHOSPHORYLATION [LARGE SCALE ANALYSIS] AT THR-36; SER-164; SER-205 AND SER-219</scope>
    <scope>IDENTIFICATION BY MASS SPECTROMETRY [LARGE SCALE ANALYSIS]</scope>
    <source>
        <tissue>Cervix carcinoma</tissue>
    </source>
</reference>
<reference key="14">
    <citation type="journal article" date="2014" name="J. Proteomics">
        <title>An enzyme assisted RP-RPLC approach for in-depth analysis of human liver phosphoproteome.</title>
        <authorList>
            <person name="Bian Y."/>
            <person name="Song C."/>
            <person name="Cheng K."/>
            <person name="Dong M."/>
            <person name="Wang F."/>
            <person name="Huang J."/>
            <person name="Sun D."/>
            <person name="Wang L."/>
            <person name="Ye M."/>
            <person name="Zou H."/>
        </authorList>
    </citation>
    <scope>PHOSPHORYLATION [LARGE SCALE ANALYSIS] AT THR-36</scope>
    <scope>IDENTIFICATION BY MASS SPECTROMETRY [LARGE SCALE ANALYSIS]</scope>
    <source>
        <tissue>Liver</tissue>
    </source>
</reference>
<reference key="15">
    <citation type="journal article" date="2014" name="Nat. Commun.">
        <title>Global profiling of co- and post-translationally N-myristoylated proteomes in human cells.</title>
        <authorList>
            <person name="Thinon E."/>
            <person name="Serwa R.A."/>
            <person name="Broncel M."/>
            <person name="Brannigan J.A."/>
            <person name="Brassat U."/>
            <person name="Wright M.H."/>
            <person name="Heal W.P."/>
            <person name="Wilkinson A.J."/>
            <person name="Mann D.J."/>
            <person name="Tate E.W."/>
        </authorList>
    </citation>
    <scope>MYRISTOYLATION AT GLY-2</scope>
    <scope>CLEAVAGE OF INITIATOR METHIONINE</scope>
    <scope>IDENTIFICATION BY MASS SPECTROMETRY</scope>
</reference>
<reference key="16">
    <citation type="journal article" date="2014" name="Proc. Natl. Acad. Sci. U.S.A.">
        <title>Mapping of SUMO sites and analysis of SUMOylation changes induced by external stimuli.</title>
        <authorList>
            <person name="Impens F."/>
            <person name="Radoshevich L."/>
            <person name="Cossart P."/>
            <person name="Ribet D."/>
        </authorList>
    </citation>
    <scope>SUMOYLATION [LARGE SCALE ANALYSIS] AT LYS-163</scope>
    <scope>IDENTIFICATION BY MASS SPECTROMETRY [LARGE SCALE ANALYSIS]</scope>
</reference>
<reference key="17">
    <citation type="journal article" date="2015" name="Proteomics">
        <title>N-terminome analysis of the human mitochondrial proteome.</title>
        <authorList>
            <person name="Vaca Jacome A.S."/>
            <person name="Rabilloud T."/>
            <person name="Schaeffer-Reiss C."/>
            <person name="Rompais M."/>
            <person name="Ayoub D."/>
            <person name="Lane L."/>
            <person name="Bairoch A."/>
            <person name="Van Dorsselaer A."/>
            <person name="Carapito C."/>
        </authorList>
    </citation>
    <scope>IDENTIFICATION BY MASS SPECTROMETRY [LARGE SCALE ANALYSIS]</scope>
</reference>
<reference key="18">
    <citation type="journal article" date="2017" name="Nat. Struct. Mol. Biol.">
        <title>Site-specific mapping of the human SUMO proteome reveals co-modification with phosphorylation.</title>
        <authorList>
            <person name="Hendriks I.A."/>
            <person name="Lyon D."/>
            <person name="Young C."/>
            <person name="Jensen L.J."/>
            <person name="Vertegaal A.C."/>
            <person name="Nielsen M.L."/>
        </authorList>
    </citation>
    <scope>SUMOYLATION [LARGE SCALE ANALYSIS] AT LYS-25; LYS-84 AND LYS-97</scope>
    <scope>IDENTIFICATION BY MASS SPECTROMETRY [LARGE SCALE ANALYSIS]</scope>
</reference>
<gene>
    <name type="primary">BASP1</name>
    <name type="synonym">NAP22</name>
</gene>
<comment type="interaction">
    <interactant intactId="EBI-358583">
        <id>P80723</id>
    </interactant>
    <interactant intactId="EBI-725647">
        <id>Q99732</id>
        <label>LITAF</label>
    </interactant>
    <organismsDiffer>false</organismsDiffer>
    <experiments>3</experiments>
</comment>
<comment type="subcellular location">
    <subcellularLocation>
        <location>Cell membrane</location>
        <topology>Lipid-anchor</topology>
    </subcellularLocation>
    <subcellularLocation>
        <location>Cell projection</location>
        <location>Growth cone</location>
    </subcellularLocation>
    <text>Associated with the membranes of growth cones that form the tips of elongating axons.</text>
</comment>
<comment type="alternative products">
    <event type="alternative splicing"/>
    <isoform>
        <id>P80723-1</id>
        <name>1</name>
        <sequence type="displayed"/>
    </isoform>
    <isoform>
        <id>P80723-2</id>
        <name>2</name>
        <sequence type="described" ref="VSP_037994"/>
    </isoform>
</comment>
<comment type="tissue specificity">
    <text>Brain.</text>
</comment>
<comment type="mass spectrometry"/>
<comment type="similarity">
    <text evidence="6">Belongs to the BASP1 family.</text>
</comment>
<dbReference type="EMBL" id="AF039656">
    <property type="protein sequence ID" value="AAC67374.1"/>
    <property type="molecule type" value="mRNA"/>
</dbReference>
<dbReference type="EMBL" id="BT019340">
    <property type="protein sequence ID" value="AAV38147.1"/>
    <property type="molecule type" value="mRNA"/>
</dbReference>
<dbReference type="EMBL" id="BT019341">
    <property type="protein sequence ID" value="AAV38148.1"/>
    <property type="molecule type" value="mRNA"/>
</dbReference>
<dbReference type="EMBL" id="AK295995">
    <property type="protein sequence ID" value="BAG58770.1"/>
    <property type="molecule type" value="mRNA"/>
</dbReference>
<dbReference type="EMBL" id="CH471102">
    <property type="protein sequence ID" value="EAX08012.1"/>
    <property type="molecule type" value="Genomic_DNA"/>
</dbReference>
<dbReference type="EMBL" id="CH471102">
    <property type="protein sequence ID" value="EAX08013.1"/>
    <property type="molecule type" value="Genomic_DNA"/>
</dbReference>
<dbReference type="EMBL" id="BC000518">
    <property type="protein sequence ID" value="AAH00518.1"/>
    <property type="molecule type" value="mRNA"/>
</dbReference>
<dbReference type="CCDS" id="CCDS3888.1">
    <molecule id="P80723-1"/>
</dbReference>
<dbReference type="RefSeq" id="NP_001258535.1">
    <molecule id="P80723-1"/>
    <property type="nucleotide sequence ID" value="NM_001271606.2"/>
</dbReference>
<dbReference type="RefSeq" id="NP_006308.3">
    <molecule id="P80723-1"/>
    <property type="nucleotide sequence ID" value="NM_006317.4"/>
</dbReference>
<dbReference type="BMRB" id="P80723"/>
<dbReference type="BioGRID" id="115680">
    <property type="interactions" value="325"/>
</dbReference>
<dbReference type="FunCoup" id="P80723">
    <property type="interactions" value="1196"/>
</dbReference>
<dbReference type="IntAct" id="P80723">
    <property type="interactions" value="95"/>
</dbReference>
<dbReference type="MINT" id="P80723"/>
<dbReference type="STRING" id="9606.ENSP00000319281"/>
<dbReference type="TCDB" id="1.A.71.1.1">
    <property type="family name" value="the brain acid-soluble protein channel (basp1 channel) family"/>
</dbReference>
<dbReference type="GlyCosmos" id="P80723">
    <property type="glycosylation" value="2 sites, 1 glycan"/>
</dbReference>
<dbReference type="GlyGen" id="P80723">
    <property type="glycosylation" value="3 sites, 1 O-linked glycan (3 sites)"/>
</dbReference>
<dbReference type="iPTMnet" id="P80723"/>
<dbReference type="PhosphoSitePlus" id="P80723"/>
<dbReference type="SwissPalm" id="P80723"/>
<dbReference type="BioMuta" id="BASP1"/>
<dbReference type="DMDM" id="6686256"/>
<dbReference type="CPTAC" id="CPTAC-31"/>
<dbReference type="CPTAC" id="CPTAC-32"/>
<dbReference type="jPOST" id="P80723"/>
<dbReference type="MassIVE" id="P80723"/>
<dbReference type="PaxDb" id="9606-ENSP00000319281"/>
<dbReference type="PeptideAtlas" id="P80723"/>
<dbReference type="ProteomicsDB" id="57688">
    <molecule id="P80723-1"/>
</dbReference>
<dbReference type="ProteomicsDB" id="57689">
    <molecule id="P80723-2"/>
</dbReference>
<dbReference type="Pumba" id="P80723"/>
<dbReference type="TopDownProteomics" id="P80723-1">
    <molecule id="P80723-1"/>
</dbReference>
<dbReference type="TopDownProteomics" id="P80723-2">
    <molecule id="P80723-2"/>
</dbReference>
<dbReference type="Antibodypedia" id="54132">
    <property type="antibodies" value="157 antibodies from 26 providers"/>
</dbReference>
<dbReference type="DNASU" id="10409"/>
<dbReference type="Ensembl" id="ENST00000322611.4">
    <molecule id="P80723-1"/>
    <property type="protein sequence ID" value="ENSP00000319281.3"/>
    <property type="gene ID" value="ENSG00000176788.9"/>
</dbReference>
<dbReference type="Ensembl" id="ENST00000616743.1">
    <molecule id="P80723-1"/>
    <property type="protein sequence ID" value="ENSP00000482066.1"/>
    <property type="gene ID" value="ENSG00000176788.9"/>
</dbReference>
<dbReference type="GeneID" id="10409"/>
<dbReference type="KEGG" id="hsa:10409"/>
<dbReference type="MANE-Select" id="ENST00000322611.4">
    <property type="protein sequence ID" value="ENSP00000319281.3"/>
    <property type="RefSeq nucleotide sequence ID" value="NM_006317.5"/>
    <property type="RefSeq protein sequence ID" value="NP_006308.3"/>
</dbReference>
<dbReference type="UCSC" id="uc003jfx.5">
    <molecule id="P80723-1"/>
    <property type="organism name" value="human"/>
</dbReference>
<dbReference type="AGR" id="HGNC:957"/>
<dbReference type="CTD" id="10409"/>
<dbReference type="DisGeNET" id="10409"/>
<dbReference type="GeneCards" id="BASP1"/>
<dbReference type="HGNC" id="HGNC:957">
    <property type="gene designation" value="BASP1"/>
</dbReference>
<dbReference type="HPA" id="ENSG00000176788">
    <property type="expression patterns" value="Tissue enhanced (brain, epididymis)"/>
</dbReference>
<dbReference type="MIM" id="605940">
    <property type="type" value="gene"/>
</dbReference>
<dbReference type="neXtProt" id="NX_P80723"/>
<dbReference type="OpenTargets" id="ENSG00000176788"/>
<dbReference type="PharmGKB" id="PA25261"/>
<dbReference type="VEuPathDB" id="HostDB:ENSG00000176788"/>
<dbReference type="eggNOG" id="ENOG502RXJZ">
    <property type="taxonomic scope" value="Eukaryota"/>
</dbReference>
<dbReference type="GeneTree" id="ENSGT00730000111450"/>
<dbReference type="HOGENOM" id="CLU_093511_0_0_1"/>
<dbReference type="InParanoid" id="P80723"/>
<dbReference type="OMA" id="EEFDHAE"/>
<dbReference type="OrthoDB" id="8964957at2759"/>
<dbReference type="PAN-GO" id="P80723">
    <property type="GO annotations" value="5 GO annotations based on evolutionary models"/>
</dbReference>
<dbReference type="PathwayCommons" id="P80723"/>
<dbReference type="Reactome" id="R-HSA-9035034">
    <property type="pathway name" value="RHOF GTPase cycle"/>
</dbReference>
<dbReference type="SignaLink" id="P80723"/>
<dbReference type="BioGRID-ORCS" id="10409">
    <property type="hits" value="30 hits in 1159 CRISPR screens"/>
</dbReference>
<dbReference type="CD-CODE" id="FB4E32DD">
    <property type="entry name" value="Presynaptic clusters and postsynaptic densities"/>
</dbReference>
<dbReference type="ChiTaRS" id="BASP1">
    <property type="organism name" value="human"/>
</dbReference>
<dbReference type="GeneWiki" id="BASP1"/>
<dbReference type="GenomeRNAi" id="10409"/>
<dbReference type="Pharos" id="P80723">
    <property type="development level" value="Tbio"/>
</dbReference>
<dbReference type="PRO" id="PR:P80723"/>
<dbReference type="Proteomes" id="UP000005640">
    <property type="component" value="Chromosome 5"/>
</dbReference>
<dbReference type="RNAct" id="P80723">
    <property type="molecule type" value="protein"/>
</dbReference>
<dbReference type="Bgee" id="ENSG00000176788">
    <property type="expression patterns" value="Expressed in orbitofrontal cortex and 205 other cell types or tissues"/>
</dbReference>
<dbReference type="ExpressionAtlas" id="P80723">
    <property type="expression patterns" value="baseline and differential"/>
</dbReference>
<dbReference type="GO" id="GO:0030054">
    <property type="term" value="C:cell junction"/>
    <property type="evidence" value="ECO:0000314"/>
    <property type="project" value="HPA"/>
</dbReference>
<dbReference type="GO" id="GO:0000785">
    <property type="term" value="C:chromatin"/>
    <property type="evidence" value="ECO:0007669"/>
    <property type="project" value="Ensembl"/>
</dbReference>
<dbReference type="GO" id="GO:0005737">
    <property type="term" value="C:cytoplasm"/>
    <property type="evidence" value="ECO:0000314"/>
    <property type="project" value="UniProtKB"/>
</dbReference>
<dbReference type="GO" id="GO:0005856">
    <property type="term" value="C:cytoskeleton"/>
    <property type="evidence" value="ECO:0000304"/>
    <property type="project" value="ProtInc"/>
</dbReference>
<dbReference type="GO" id="GO:0070062">
    <property type="term" value="C:extracellular exosome"/>
    <property type="evidence" value="ECO:0007005"/>
    <property type="project" value="UniProtKB"/>
</dbReference>
<dbReference type="GO" id="GO:0030426">
    <property type="term" value="C:growth cone"/>
    <property type="evidence" value="ECO:0007669"/>
    <property type="project" value="UniProtKB-SubCell"/>
</dbReference>
<dbReference type="GO" id="GO:0016363">
    <property type="term" value="C:nuclear matrix"/>
    <property type="evidence" value="ECO:0000314"/>
    <property type="project" value="UniProtKB"/>
</dbReference>
<dbReference type="GO" id="GO:0016607">
    <property type="term" value="C:nuclear speck"/>
    <property type="evidence" value="ECO:0000250"/>
    <property type="project" value="UniProtKB"/>
</dbReference>
<dbReference type="GO" id="GO:0005634">
    <property type="term" value="C:nucleus"/>
    <property type="evidence" value="ECO:0000314"/>
    <property type="project" value="UniProtKB"/>
</dbReference>
<dbReference type="GO" id="GO:0005886">
    <property type="term" value="C:plasma membrane"/>
    <property type="evidence" value="ECO:0000314"/>
    <property type="project" value="HPA"/>
</dbReference>
<dbReference type="GO" id="GO:0016605">
    <property type="term" value="C:PML body"/>
    <property type="evidence" value="ECO:0000314"/>
    <property type="project" value="UniProtKB"/>
</dbReference>
<dbReference type="GO" id="GO:0031982">
    <property type="term" value="C:vesicle"/>
    <property type="evidence" value="ECO:0007005"/>
    <property type="project" value="UniProtKB"/>
</dbReference>
<dbReference type="GO" id="GO:0005516">
    <property type="term" value="F:calmodulin binding"/>
    <property type="evidence" value="ECO:0000314"/>
    <property type="project" value="DisProt"/>
</dbReference>
<dbReference type="GO" id="GO:0019904">
    <property type="term" value="F:protein domain specific binding"/>
    <property type="evidence" value="ECO:0000353"/>
    <property type="project" value="UniProtKB"/>
</dbReference>
<dbReference type="GO" id="GO:0000976">
    <property type="term" value="F:transcription cis-regulatory region binding"/>
    <property type="evidence" value="ECO:0000250"/>
    <property type="project" value="UniProtKB"/>
</dbReference>
<dbReference type="GO" id="GO:0003714">
    <property type="term" value="F:transcription corepressor activity"/>
    <property type="evidence" value="ECO:0000315"/>
    <property type="project" value="UniProtKB"/>
</dbReference>
<dbReference type="GO" id="GO:0060539">
    <property type="term" value="P:diaphragm development"/>
    <property type="evidence" value="ECO:0000250"/>
    <property type="project" value="UniProtKB"/>
</dbReference>
<dbReference type="GO" id="GO:0008406">
    <property type="term" value="P:gonad development"/>
    <property type="evidence" value="ECO:0000250"/>
    <property type="project" value="UniProtKB"/>
</dbReference>
<dbReference type="GO" id="GO:0060231">
    <property type="term" value="P:mesenchymal to epithelial transition"/>
    <property type="evidence" value="ECO:0000250"/>
    <property type="project" value="UniProtKB"/>
</dbReference>
<dbReference type="GO" id="GO:0072075">
    <property type="term" value="P:metanephric mesenchyme development"/>
    <property type="evidence" value="ECO:0000250"/>
    <property type="project" value="UniProtKB"/>
</dbReference>
<dbReference type="GO" id="GO:0045892">
    <property type="term" value="P:negative regulation of DNA-templated transcription"/>
    <property type="evidence" value="ECO:0000314"/>
    <property type="project" value="UniProtKB"/>
</dbReference>
<dbReference type="GO" id="GO:0072112">
    <property type="term" value="P:podocyte differentiation"/>
    <property type="evidence" value="ECO:0000250"/>
    <property type="project" value="UniProtKB"/>
</dbReference>
<dbReference type="GO" id="GO:0060421">
    <property type="term" value="P:positive regulation of heart growth"/>
    <property type="evidence" value="ECO:0000250"/>
    <property type="project" value="UniProtKB"/>
</dbReference>
<dbReference type="GO" id="GO:2001076">
    <property type="term" value="P:positive regulation of metanephric ureteric bud development"/>
    <property type="evidence" value="ECO:0000250"/>
    <property type="project" value="UniProtKB"/>
</dbReference>
<dbReference type="GO" id="GO:0051260">
    <property type="term" value="P:protein homooligomerization"/>
    <property type="evidence" value="ECO:0000314"/>
    <property type="project" value="DisProt"/>
</dbReference>
<dbReference type="GO" id="GO:0021762">
    <property type="term" value="P:substantia nigra development"/>
    <property type="evidence" value="ECO:0007007"/>
    <property type="project" value="UniProtKB"/>
</dbReference>
<dbReference type="GO" id="GO:0097435">
    <property type="term" value="P:supramolecular fiber organization"/>
    <property type="evidence" value="ECO:0000314"/>
    <property type="project" value="DisProt"/>
</dbReference>
<dbReference type="GO" id="GO:0007356">
    <property type="term" value="P:thorax and anterior abdomen determination"/>
    <property type="evidence" value="ECO:0000250"/>
    <property type="project" value="UniProtKB"/>
</dbReference>
<dbReference type="DisProt" id="DP00930"/>
<dbReference type="InterPro" id="IPR008408">
    <property type="entry name" value="BASP1"/>
</dbReference>
<dbReference type="PANTHER" id="PTHR23212">
    <property type="entry name" value="BRAIN ACID SOLUBLE PROTEIN 1"/>
    <property type="match status" value="1"/>
</dbReference>
<dbReference type="PANTHER" id="PTHR23212:SF0">
    <property type="entry name" value="BRAIN ACID SOLUBLE PROTEIN 1"/>
    <property type="match status" value="1"/>
</dbReference>
<dbReference type="Pfam" id="PF05466">
    <property type="entry name" value="BASP1"/>
    <property type="match status" value="1"/>
</dbReference>
<protein>
    <recommendedName>
        <fullName>Brain acid soluble protein 1</fullName>
    </recommendedName>
    <alternativeName>
        <fullName>22 kDa neuronal tissue-enriched acidic protein</fullName>
    </alternativeName>
    <alternativeName>
        <fullName>Neuronal axonal membrane protein NAP-22</fullName>
    </alternativeName>
</protein>
<accession>P80723</accession>
<accession>B4DJA8</accession>
<accession>D3DTD5</accession>
<accession>O43596</accession>
<accession>Q5U0S0</accession>
<accession>Q9BWA5</accession>
<keyword id="KW-0025">Alternative splicing</keyword>
<keyword id="KW-1003">Cell membrane</keyword>
<keyword id="KW-0966">Cell projection</keyword>
<keyword id="KW-0903">Direct protein sequencing</keyword>
<keyword id="KW-1017">Isopeptide bond</keyword>
<keyword id="KW-0449">Lipoprotein</keyword>
<keyword id="KW-0472">Membrane</keyword>
<keyword id="KW-0519">Myristate</keyword>
<keyword id="KW-0597">Phosphoprotein</keyword>
<keyword id="KW-1267">Proteomics identification</keyword>
<keyword id="KW-1185">Reference proteome</keyword>
<keyword id="KW-0832">Ubl conjugation</keyword>
<proteinExistence type="evidence at protein level"/>
<name>BASP1_HUMAN</name>
<evidence type="ECO:0000250" key="1">
    <source>
        <dbReference type="UniProtKB" id="Q91XV3"/>
    </source>
</evidence>
<evidence type="ECO:0000256" key="2">
    <source>
        <dbReference type="SAM" id="MobiDB-lite"/>
    </source>
</evidence>
<evidence type="ECO:0000269" key="3">
    <source>
    </source>
</evidence>
<evidence type="ECO:0000269" key="4">
    <source>
    </source>
</evidence>
<evidence type="ECO:0000303" key="5">
    <source>
    </source>
</evidence>
<evidence type="ECO:0000305" key="6"/>
<evidence type="ECO:0007744" key="7">
    <source>
    </source>
</evidence>
<evidence type="ECO:0007744" key="8">
    <source>
    </source>
</evidence>
<evidence type="ECO:0007744" key="9">
    <source>
    </source>
</evidence>
<evidence type="ECO:0007744" key="10">
    <source>
    </source>
</evidence>
<evidence type="ECO:0007744" key="11">
    <source>
    </source>
</evidence>
<evidence type="ECO:0007744" key="12">
    <source>
    </source>
</evidence>
<evidence type="ECO:0007744" key="13">
    <source>
    </source>
</evidence>